<name>APT_ACAM1</name>
<evidence type="ECO:0000255" key="1">
    <source>
        <dbReference type="HAMAP-Rule" id="MF_00004"/>
    </source>
</evidence>
<keyword id="KW-0963">Cytoplasm</keyword>
<keyword id="KW-0328">Glycosyltransferase</keyword>
<keyword id="KW-0660">Purine salvage</keyword>
<keyword id="KW-1185">Reference proteome</keyword>
<keyword id="KW-0808">Transferase</keyword>
<feature type="chain" id="PRO_1000073786" description="Adenine phosphoribosyltransferase">
    <location>
        <begin position="1"/>
        <end position="170"/>
    </location>
</feature>
<organism>
    <name type="scientific">Acaryochloris marina (strain MBIC 11017)</name>
    <dbReference type="NCBI Taxonomy" id="329726"/>
    <lineage>
        <taxon>Bacteria</taxon>
        <taxon>Bacillati</taxon>
        <taxon>Cyanobacteriota</taxon>
        <taxon>Cyanophyceae</taxon>
        <taxon>Acaryochloridales</taxon>
        <taxon>Acaryochloridaceae</taxon>
        <taxon>Acaryochloris</taxon>
    </lineage>
</organism>
<proteinExistence type="inferred from homology"/>
<comment type="function">
    <text evidence="1">Catalyzes a salvage reaction resulting in the formation of AMP, that is energically less costly than de novo synthesis.</text>
</comment>
<comment type="catalytic activity">
    <reaction evidence="1">
        <text>AMP + diphosphate = 5-phospho-alpha-D-ribose 1-diphosphate + adenine</text>
        <dbReference type="Rhea" id="RHEA:16609"/>
        <dbReference type="ChEBI" id="CHEBI:16708"/>
        <dbReference type="ChEBI" id="CHEBI:33019"/>
        <dbReference type="ChEBI" id="CHEBI:58017"/>
        <dbReference type="ChEBI" id="CHEBI:456215"/>
        <dbReference type="EC" id="2.4.2.7"/>
    </reaction>
</comment>
<comment type="pathway">
    <text evidence="1">Purine metabolism; AMP biosynthesis via salvage pathway; AMP from adenine: step 1/1.</text>
</comment>
<comment type="subunit">
    <text evidence="1">Homodimer.</text>
</comment>
<comment type="subcellular location">
    <subcellularLocation>
        <location evidence="1">Cytoplasm</location>
    </subcellularLocation>
</comment>
<comment type="similarity">
    <text evidence="1">Belongs to the purine/pyrimidine phosphoribosyltransferase family.</text>
</comment>
<protein>
    <recommendedName>
        <fullName evidence="1">Adenine phosphoribosyltransferase</fullName>
        <shortName evidence="1">APRT</shortName>
        <ecNumber evidence="1">2.4.2.7</ecNumber>
    </recommendedName>
</protein>
<reference key="1">
    <citation type="journal article" date="2008" name="Proc. Natl. Acad. Sci. U.S.A.">
        <title>Niche adaptation and genome expansion in the chlorophyll d-producing cyanobacterium Acaryochloris marina.</title>
        <authorList>
            <person name="Swingley W.D."/>
            <person name="Chen M."/>
            <person name="Cheung P.C."/>
            <person name="Conrad A.L."/>
            <person name="Dejesa L.C."/>
            <person name="Hao J."/>
            <person name="Honchak B.M."/>
            <person name="Karbach L.E."/>
            <person name="Kurdoglu A."/>
            <person name="Lahiri S."/>
            <person name="Mastrian S.D."/>
            <person name="Miyashita H."/>
            <person name="Page L."/>
            <person name="Ramakrishna P."/>
            <person name="Satoh S."/>
            <person name="Sattley W.M."/>
            <person name="Shimada Y."/>
            <person name="Taylor H.L."/>
            <person name="Tomo T."/>
            <person name="Tsuchiya T."/>
            <person name="Wang Z.T."/>
            <person name="Raymond J."/>
            <person name="Mimuro M."/>
            <person name="Blankenship R.E."/>
            <person name="Touchman J.W."/>
        </authorList>
    </citation>
    <scope>NUCLEOTIDE SEQUENCE [LARGE SCALE GENOMIC DNA]</scope>
    <source>
        <strain>MBIC 11017</strain>
    </source>
</reference>
<sequence>MDLKSLIRDIPDFPKPGILFRDITTLLQNPDGLRYVIDQFTEDYREQSIDYVVGIESRGFIFGAPLAYQLGAGFVPVRKPGKLPAAIHAQEYELEYGTDRLEIHQDACPAGSRVLVVDDLLATGGTAAATAQLLAPLNCTLVGFGFIIELTGLAGRQKLPDCHINALVEY</sequence>
<dbReference type="EC" id="2.4.2.7" evidence="1"/>
<dbReference type="EMBL" id="CP000828">
    <property type="protein sequence ID" value="ABW27942.1"/>
    <property type="molecule type" value="Genomic_DNA"/>
</dbReference>
<dbReference type="RefSeq" id="WP_012163376.1">
    <property type="nucleotide sequence ID" value="NC_009925.1"/>
</dbReference>
<dbReference type="SMR" id="B0CBF7"/>
<dbReference type="STRING" id="329726.AM1_2945"/>
<dbReference type="KEGG" id="amr:AM1_2945"/>
<dbReference type="eggNOG" id="COG0503">
    <property type="taxonomic scope" value="Bacteria"/>
</dbReference>
<dbReference type="HOGENOM" id="CLU_063339_3_0_3"/>
<dbReference type="OrthoDB" id="9803963at2"/>
<dbReference type="UniPathway" id="UPA00588">
    <property type="reaction ID" value="UER00646"/>
</dbReference>
<dbReference type="Proteomes" id="UP000000268">
    <property type="component" value="Chromosome"/>
</dbReference>
<dbReference type="GO" id="GO:0005737">
    <property type="term" value="C:cytoplasm"/>
    <property type="evidence" value="ECO:0007669"/>
    <property type="project" value="UniProtKB-SubCell"/>
</dbReference>
<dbReference type="GO" id="GO:0002055">
    <property type="term" value="F:adenine binding"/>
    <property type="evidence" value="ECO:0007669"/>
    <property type="project" value="TreeGrafter"/>
</dbReference>
<dbReference type="GO" id="GO:0003999">
    <property type="term" value="F:adenine phosphoribosyltransferase activity"/>
    <property type="evidence" value="ECO:0007669"/>
    <property type="project" value="UniProtKB-UniRule"/>
</dbReference>
<dbReference type="GO" id="GO:0016208">
    <property type="term" value="F:AMP binding"/>
    <property type="evidence" value="ECO:0007669"/>
    <property type="project" value="TreeGrafter"/>
</dbReference>
<dbReference type="GO" id="GO:0006168">
    <property type="term" value="P:adenine salvage"/>
    <property type="evidence" value="ECO:0007669"/>
    <property type="project" value="InterPro"/>
</dbReference>
<dbReference type="GO" id="GO:0044209">
    <property type="term" value="P:AMP salvage"/>
    <property type="evidence" value="ECO:0007669"/>
    <property type="project" value="UniProtKB-UniRule"/>
</dbReference>
<dbReference type="GO" id="GO:0006166">
    <property type="term" value="P:purine ribonucleoside salvage"/>
    <property type="evidence" value="ECO:0007669"/>
    <property type="project" value="UniProtKB-KW"/>
</dbReference>
<dbReference type="CDD" id="cd06223">
    <property type="entry name" value="PRTases_typeI"/>
    <property type="match status" value="1"/>
</dbReference>
<dbReference type="FunFam" id="3.40.50.2020:FF:000004">
    <property type="entry name" value="Adenine phosphoribosyltransferase"/>
    <property type="match status" value="1"/>
</dbReference>
<dbReference type="Gene3D" id="3.40.50.2020">
    <property type="match status" value="1"/>
</dbReference>
<dbReference type="HAMAP" id="MF_00004">
    <property type="entry name" value="Aden_phosphoribosyltr"/>
    <property type="match status" value="1"/>
</dbReference>
<dbReference type="InterPro" id="IPR005764">
    <property type="entry name" value="Ade_phspho_trans"/>
</dbReference>
<dbReference type="InterPro" id="IPR000836">
    <property type="entry name" value="PRibTrfase_dom"/>
</dbReference>
<dbReference type="InterPro" id="IPR029057">
    <property type="entry name" value="PRTase-like"/>
</dbReference>
<dbReference type="InterPro" id="IPR050054">
    <property type="entry name" value="UPRTase/APRTase"/>
</dbReference>
<dbReference type="NCBIfam" id="TIGR01090">
    <property type="entry name" value="apt"/>
    <property type="match status" value="1"/>
</dbReference>
<dbReference type="NCBIfam" id="NF002634">
    <property type="entry name" value="PRK02304.1-3"/>
    <property type="match status" value="1"/>
</dbReference>
<dbReference type="NCBIfam" id="NF002636">
    <property type="entry name" value="PRK02304.1-5"/>
    <property type="match status" value="1"/>
</dbReference>
<dbReference type="PANTHER" id="PTHR32315">
    <property type="entry name" value="ADENINE PHOSPHORIBOSYLTRANSFERASE"/>
    <property type="match status" value="1"/>
</dbReference>
<dbReference type="PANTHER" id="PTHR32315:SF3">
    <property type="entry name" value="ADENINE PHOSPHORIBOSYLTRANSFERASE"/>
    <property type="match status" value="1"/>
</dbReference>
<dbReference type="Pfam" id="PF00156">
    <property type="entry name" value="Pribosyltran"/>
    <property type="match status" value="1"/>
</dbReference>
<dbReference type="SUPFAM" id="SSF53271">
    <property type="entry name" value="PRTase-like"/>
    <property type="match status" value="1"/>
</dbReference>
<dbReference type="PROSITE" id="PS00103">
    <property type="entry name" value="PUR_PYR_PR_TRANSFER"/>
    <property type="match status" value="1"/>
</dbReference>
<accession>B0CBF7</accession>
<gene>
    <name evidence="1" type="primary">apt</name>
    <name type="ordered locus">AM1_2945</name>
</gene>